<reference key="1">
    <citation type="submission" date="2001-08" db="EMBL/GenBank/DDBJ databases">
        <title>cDNA sequence of neurotoxic peptide, caeron, from spider Caerostris extrusa venom.</title>
        <authorList>
            <person name="Dai L."/>
            <person name="Naoki H."/>
            <person name="Nakajima T."/>
        </authorList>
    </citation>
    <scope>NUCLEOTIDE SEQUENCE [MRNA]</scope>
    <source>
        <tissue>Venom gland</tissue>
    </source>
</reference>
<proteinExistence type="evidence at transcript level"/>
<feature type="signal peptide" evidence="1">
    <location>
        <begin position="1"/>
        <end position="21"/>
    </location>
</feature>
<feature type="chain" id="PRO_0000035585" description="U3-aranetoxin-Ce1a">
    <location>
        <begin position="22"/>
        <end position="102"/>
    </location>
</feature>
<protein>
    <recommendedName>
        <fullName>U3-aranetoxin-Ce1a</fullName>
        <shortName>U3-AATX-Ce1a</shortName>
    </recommendedName>
    <alternativeName>
        <fullName>Neurotoxic peptide caeron</fullName>
    </alternativeName>
</protein>
<organism>
    <name type="scientific">Caerostris extrusa</name>
    <name type="common">Bark spider</name>
    <name type="synonym">Caerostris bankana</name>
    <dbReference type="NCBI Taxonomy" id="172846"/>
    <lineage>
        <taxon>Eukaryota</taxon>
        <taxon>Metazoa</taxon>
        <taxon>Ecdysozoa</taxon>
        <taxon>Arthropoda</taxon>
        <taxon>Chelicerata</taxon>
        <taxon>Arachnida</taxon>
        <taxon>Araneae</taxon>
        <taxon>Araneomorphae</taxon>
        <taxon>Entelegynae</taxon>
        <taxon>Araneoidea</taxon>
        <taxon>Araneidae</taxon>
        <taxon>Caerostris</taxon>
    </lineage>
</organism>
<sequence length="102" mass="11403">MKHLSIFFVFFCCICVMLCDAYGDCKKNSDCKAGECCVNTPPFARSTCQKYLQQGEFCAHMGKYNPLGKYINMCPCGKGLKCQLKDVSGPLALFRSRMLTCV</sequence>
<name>TXCA_CAEEX</name>
<comment type="subcellular location">
    <subcellularLocation>
        <location evidence="2">Secreted</location>
    </subcellularLocation>
</comment>
<comment type="tissue specificity">
    <text>Expressed by the venom gland.</text>
</comment>
<comment type="similarity">
    <text>Belongs to the neurotoxin 20 family.</text>
</comment>
<evidence type="ECO:0000255" key="1"/>
<evidence type="ECO:0000305" key="2"/>
<dbReference type="EMBL" id="AY050523">
    <property type="protein sequence ID" value="AAL12487.1"/>
    <property type="molecule type" value="mRNA"/>
</dbReference>
<dbReference type="SMR" id="Q8MTX1"/>
<dbReference type="ArachnoServer" id="AS000300">
    <property type="toxin name" value="U3-aranetoxin-Ce1a"/>
</dbReference>
<dbReference type="GO" id="GO:0005576">
    <property type="term" value="C:extracellular region"/>
    <property type="evidence" value="ECO:0007669"/>
    <property type="project" value="UniProtKB-SubCell"/>
</dbReference>
<dbReference type="GO" id="GO:0090729">
    <property type="term" value="F:toxin activity"/>
    <property type="evidence" value="ECO:0007669"/>
    <property type="project" value="UniProtKB-KW"/>
</dbReference>
<dbReference type="Gene3D" id="2.10.80.10">
    <property type="entry name" value="Lipase, subunit A"/>
    <property type="match status" value="1"/>
</dbReference>
<dbReference type="InterPro" id="IPR020202">
    <property type="entry name" value="Atracotoxin"/>
</dbReference>
<dbReference type="Pfam" id="PF17556">
    <property type="entry name" value="MIT_LIKE_ACTX"/>
    <property type="match status" value="1"/>
</dbReference>
<accession>Q8MTX1</accession>
<keyword id="KW-0528">Neurotoxin</keyword>
<keyword id="KW-0964">Secreted</keyword>
<keyword id="KW-0732">Signal</keyword>
<keyword id="KW-0800">Toxin</keyword>